<reference key="1">
    <citation type="submission" date="2007-03" db="EMBL/GenBank/DDBJ databases">
        <title>Association of the agouti signaling protein gene with coat color variation in the macaques.</title>
        <authorList>
            <person name="Nakayama K."/>
            <person name="Shotake T."/>
            <person name="Takenaka O."/>
            <person name="Ishida T."/>
        </authorList>
    </citation>
    <scope>NUCLEOTIDE SEQUENCE [GENOMIC DNA]</scope>
</reference>
<keyword id="KW-1015">Disulfide bond</keyword>
<keyword id="KW-0325">Glycoprotein</keyword>
<keyword id="KW-0960">Knottin</keyword>
<keyword id="KW-0964">Secreted</keyword>
<keyword id="KW-0732">Signal</keyword>
<comment type="function">
    <text evidence="3">Involved in the regulation of melanogenesis. The binding of ASP to MC1R precludes alpha-MSH initiated signaling and thus blocks production of cAMP, leading to a down-regulation of eumelanogenesis (brown/black pigment) and thus increasing synthesis of pheomelanin (yellow/red pigment) (By similarity).</text>
</comment>
<comment type="subcellular location">
    <subcellularLocation>
        <location evidence="2">Secreted</location>
    </subcellularLocation>
</comment>
<comment type="domain">
    <text evidence="1">The presence of a 'disulfide through disulfide knot' structurally defines this protein as a knottin.</text>
</comment>
<organism>
    <name type="scientific">Macaca cyclopis</name>
    <name type="common">Taiwan macaque</name>
    <dbReference type="NCBI Taxonomy" id="78449"/>
    <lineage>
        <taxon>Eukaryota</taxon>
        <taxon>Metazoa</taxon>
        <taxon>Chordata</taxon>
        <taxon>Craniata</taxon>
        <taxon>Vertebrata</taxon>
        <taxon>Euteleostomi</taxon>
        <taxon>Mammalia</taxon>
        <taxon>Eutheria</taxon>
        <taxon>Euarchontoglires</taxon>
        <taxon>Primates</taxon>
        <taxon>Haplorrhini</taxon>
        <taxon>Catarrhini</taxon>
        <taxon>Cercopithecidae</taxon>
        <taxon>Cercopithecinae</taxon>
        <taxon>Macaca</taxon>
    </lineage>
</organism>
<feature type="signal peptide" evidence="4">
    <location>
        <begin position="1"/>
        <end position="22"/>
    </location>
</feature>
<feature type="chain" id="PRO_0000323392" description="Agouti-signaling protein">
    <location>
        <begin position="23"/>
        <end position="132"/>
    </location>
</feature>
<feature type="domain" description="Agouti" evidence="5">
    <location>
        <begin position="93"/>
        <end position="132"/>
    </location>
</feature>
<feature type="region of interest" description="Disordered" evidence="6">
    <location>
        <begin position="60"/>
        <end position="88"/>
    </location>
</feature>
<feature type="compositionally biased region" description="Basic and acidic residues" evidence="6">
    <location>
        <begin position="63"/>
        <end position="79"/>
    </location>
</feature>
<feature type="glycosylation site" description="N-linked (GlcNAc...) asparagine" evidence="4">
    <location>
        <position position="39"/>
    </location>
</feature>
<feature type="disulfide bond" evidence="5">
    <location>
        <begin position="93"/>
        <end position="108"/>
    </location>
</feature>
<feature type="disulfide bond" evidence="5">
    <location>
        <begin position="100"/>
        <end position="114"/>
    </location>
</feature>
<feature type="disulfide bond" evidence="5">
    <location>
        <begin position="107"/>
        <end position="125"/>
    </location>
</feature>
<feature type="disulfide bond" evidence="5">
    <location>
        <begin position="111"/>
        <end position="132"/>
    </location>
</feature>
<feature type="disulfide bond" evidence="5">
    <location>
        <begin position="116"/>
        <end position="123"/>
    </location>
</feature>
<evidence type="ECO:0000250" key="1"/>
<evidence type="ECO:0000250" key="2">
    <source>
        <dbReference type="UniProtKB" id="P42127"/>
    </source>
</evidence>
<evidence type="ECO:0000250" key="3">
    <source>
        <dbReference type="UniProtKB" id="Q03288"/>
    </source>
</evidence>
<evidence type="ECO:0000255" key="4"/>
<evidence type="ECO:0000255" key="5">
    <source>
        <dbReference type="PROSITE-ProRule" id="PRU00494"/>
    </source>
</evidence>
<evidence type="ECO:0000256" key="6">
    <source>
        <dbReference type="SAM" id="MobiDB-lite"/>
    </source>
</evidence>
<accession>A8CEM1</accession>
<proteinExistence type="inferred from homology"/>
<sequence length="132" mass="14675">MDVTRLLLATLLVFLCFFTAYSHPPPEEKLRDDRSLRSNSSVNLLDFPSVSIMALNKNSKQISRKEAEKKRSSKKEASMKKVARPRTPLSAPCVATRDSCKPPAPACCDPCASCQCRFFRSACSCRVLSLNC</sequence>
<name>ASIP_MACCY</name>
<gene>
    <name type="primary">ASIP</name>
</gene>
<dbReference type="EMBL" id="AB299209">
    <property type="protein sequence ID" value="BAF80793.1"/>
    <property type="molecule type" value="Genomic_DNA"/>
</dbReference>
<dbReference type="EMBL" id="AB299210">
    <property type="protein sequence ID" value="BAF80794.1"/>
    <property type="molecule type" value="Genomic_DNA"/>
</dbReference>
<dbReference type="GlyCosmos" id="A8CEM1">
    <property type="glycosylation" value="1 site, No reported glycans"/>
</dbReference>
<dbReference type="GO" id="GO:0005615">
    <property type="term" value="C:extracellular space"/>
    <property type="evidence" value="ECO:0000250"/>
    <property type="project" value="UniProtKB"/>
</dbReference>
<dbReference type="GO" id="GO:0031779">
    <property type="term" value="F:melanocortin receptor binding"/>
    <property type="evidence" value="ECO:0007669"/>
    <property type="project" value="TreeGrafter"/>
</dbReference>
<dbReference type="GO" id="GO:0005184">
    <property type="term" value="F:neuropeptide hormone activity"/>
    <property type="evidence" value="ECO:0007669"/>
    <property type="project" value="TreeGrafter"/>
</dbReference>
<dbReference type="GO" id="GO:0009755">
    <property type="term" value="P:hormone-mediated signaling pathway"/>
    <property type="evidence" value="ECO:0007669"/>
    <property type="project" value="InterPro"/>
</dbReference>
<dbReference type="GO" id="GO:0042438">
    <property type="term" value="P:melanin biosynthetic process"/>
    <property type="evidence" value="ECO:0000250"/>
    <property type="project" value="UniProtKB"/>
</dbReference>
<dbReference type="GO" id="GO:0032438">
    <property type="term" value="P:melanosome organization"/>
    <property type="evidence" value="ECO:0007669"/>
    <property type="project" value="TreeGrafter"/>
</dbReference>
<dbReference type="FunFam" id="4.10.760.10:FF:000002">
    <property type="entry name" value="Agouti-signaling protein"/>
    <property type="match status" value="1"/>
</dbReference>
<dbReference type="Gene3D" id="4.10.760.10">
    <property type="entry name" value="Agouti domain"/>
    <property type="match status" value="1"/>
</dbReference>
<dbReference type="InterPro" id="IPR007733">
    <property type="entry name" value="Agouti"/>
</dbReference>
<dbReference type="InterPro" id="IPR027300">
    <property type="entry name" value="Agouti_dom"/>
</dbReference>
<dbReference type="InterPro" id="IPR036836">
    <property type="entry name" value="Agouti_dom_sf"/>
</dbReference>
<dbReference type="PANTHER" id="PTHR16551">
    <property type="entry name" value="AGOUTI RELATED"/>
    <property type="match status" value="1"/>
</dbReference>
<dbReference type="PANTHER" id="PTHR16551:SF1">
    <property type="entry name" value="AGOUTI-SIGNALING PROTEIN"/>
    <property type="match status" value="1"/>
</dbReference>
<dbReference type="Pfam" id="PF05039">
    <property type="entry name" value="Agouti"/>
    <property type="match status" value="1"/>
</dbReference>
<dbReference type="SMART" id="SM00792">
    <property type="entry name" value="Agouti"/>
    <property type="match status" value="1"/>
</dbReference>
<dbReference type="SUPFAM" id="SSF57055">
    <property type="entry name" value="Agouti-related protein"/>
    <property type="match status" value="1"/>
</dbReference>
<dbReference type="PROSITE" id="PS60024">
    <property type="entry name" value="AGOUTI_1"/>
    <property type="match status" value="1"/>
</dbReference>
<dbReference type="PROSITE" id="PS51150">
    <property type="entry name" value="AGOUTI_2"/>
    <property type="match status" value="1"/>
</dbReference>
<protein>
    <recommendedName>
        <fullName>Agouti-signaling protein</fullName>
        <shortName>ASP</shortName>
    </recommendedName>
    <alternativeName>
        <fullName>Agouti switch protein</fullName>
    </alternativeName>
</protein>